<accession>A6TU99</accession>
<protein>
    <recommendedName>
        <fullName evidence="1">Glutamate 5-kinase</fullName>
        <ecNumber evidence="1">2.7.2.11</ecNumber>
    </recommendedName>
    <alternativeName>
        <fullName evidence="1">Gamma-glutamyl kinase</fullName>
        <shortName evidence="1">GK</shortName>
    </alternativeName>
</protein>
<dbReference type="EC" id="2.7.2.11" evidence="1"/>
<dbReference type="EMBL" id="CP000724">
    <property type="protein sequence ID" value="ABR49767.1"/>
    <property type="molecule type" value="Genomic_DNA"/>
</dbReference>
<dbReference type="RefSeq" id="WP_012064727.1">
    <property type="nucleotide sequence ID" value="NC_009633.1"/>
</dbReference>
<dbReference type="SMR" id="A6TU99"/>
<dbReference type="STRING" id="293826.Amet_3645"/>
<dbReference type="KEGG" id="amt:Amet_3645"/>
<dbReference type="eggNOG" id="COG0263">
    <property type="taxonomic scope" value="Bacteria"/>
</dbReference>
<dbReference type="HOGENOM" id="CLU_025400_0_0_9"/>
<dbReference type="OrthoDB" id="9804434at2"/>
<dbReference type="UniPathway" id="UPA00098">
    <property type="reaction ID" value="UER00359"/>
</dbReference>
<dbReference type="Proteomes" id="UP000001572">
    <property type="component" value="Chromosome"/>
</dbReference>
<dbReference type="GO" id="GO:0005829">
    <property type="term" value="C:cytosol"/>
    <property type="evidence" value="ECO:0007669"/>
    <property type="project" value="TreeGrafter"/>
</dbReference>
<dbReference type="GO" id="GO:0005524">
    <property type="term" value="F:ATP binding"/>
    <property type="evidence" value="ECO:0007669"/>
    <property type="project" value="UniProtKB-KW"/>
</dbReference>
<dbReference type="GO" id="GO:0004349">
    <property type="term" value="F:glutamate 5-kinase activity"/>
    <property type="evidence" value="ECO:0007669"/>
    <property type="project" value="UniProtKB-UniRule"/>
</dbReference>
<dbReference type="GO" id="GO:0055129">
    <property type="term" value="P:L-proline biosynthetic process"/>
    <property type="evidence" value="ECO:0007669"/>
    <property type="project" value="UniProtKB-UniRule"/>
</dbReference>
<dbReference type="CDD" id="cd04242">
    <property type="entry name" value="AAK_G5K_ProB"/>
    <property type="match status" value="1"/>
</dbReference>
<dbReference type="FunFam" id="3.40.1160.10:FF:000018">
    <property type="entry name" value="Glutamate 5-kinase"/>
    <property type="match status" value="1"/>
</dbReference>
<dbReference type="Gene3D" id="3.40.1160.10">
    <property type="entry name" value="Acetylglutamate kinase-like"/>
    <property type="match status" value="1"/>
</dbReference>
<dbReference type="HAMAP" id="MF_00456">
    <property type="entry name" value="ProB"/>
    <property type="match status" value="1"/>
</dbReference>
<dbReference type="InterPro" id="IPR036393">
    <property type="entry name" value="AceGlu_kinase-like_sf"/>
</dbReference>
<dbReference type="InterPro" id="IPR001048">
    <property type="entry name" value="Asp/Glu/Uridylate_kinase"/>
</dbReference>
<dbReference type="InterPro" id="IPR041739">
    <property type="entry name" value="G5K_ProB"/>
</dbReference>
<dbReference type="InterPro" id="IPR001057">
    <property type="entry name" value="Glu/AcGlu_kinase"/>
</dbReference>
<dbReference type="InterPro" id="IPR011529">
    <property type="entry name" value="Glu_5kinase"/>
</dbReference>
<dbReference type="InterPro" id="IPR005715">
    <property type="entry name" value="Glu_5kinase/COase_Synthase"/>
</dbReference>
<dbReference type="InterPro" id="IPR019797">
    <property type="entry name" value="Glutamate_5-kinase_CS"/>
</dbReference>
<dbReference type="NCBIfam" id="TIGR01027">
    <property type="entry name" value="proB"/>
    <property type="match status" value="1"/>
</dbReference>
<dbReference type="PANTHER" id="PTHR43654">
    <property type="entry name" value="GLUTAMATE 5-KINASE"/>
    <property type="match status" value="1"/>
</dbReference>
<dbReference type="PANTHER" id="PTHR43654:SF1">
    <property type="entry name" value="ISOPENTENYL PHOSPHATE KINASE"/>
    <property type="match status" value="1"/>
</dbReference>
<dbReference type="Pfam" id="PF00696">
    <property type="entry name" value="AA_kinase"/>
    <property type="match status" value="1"/>
</dbReference>
<dbReference type="PIRSF" id="PIRSF000729">
    <property type="entry name" value="GK"/>
    <property type="match status" value="1"/>
</dbReference>
<dbReference type="PRINTS" id="PR00474">
    <property type="entry name" value="GLU5KINASE"/>
</dbReference>
<dbReference type="SUPFAM" id="SSF53633">
    <property type="entry name" value="Carbamate kinase-like"/>
    <property type="match status" value="1"/>
</dbReference>
<dbReference type="PROSITE" id="PS00902">
    <property type="entry name" value="GLUTAMATE_5_KINASE"/>
    <property type="match status" value="1"/>
</dbReference>
<comment type="function">
    <text evidence="1">Catalyzes the transfer of a phosphate group to glutamate to form L-glutamate 5-phosphate.</text>
</comment>
<comment type="catalytic activity">
    <reaction evidence="1">
        <text>L-glutamate + ATP = L-glutamyl 5-phosphate + ADP</text>
        <dbReference type="Rhea" id="RHEA:14877"/>
        <dbReference type="ChEBI" id="CHEBI:29985"/>
        <dbReference type="ChEBI" id="CHEBI:30616"/>
        <dbReference type="ChEBI" id="CHEBI:58274"/>
        <dbReference type="ChEBI" id="CHEBI:456216"/>
        <dbReference type="EC" id="2.7.2.11"/>
    </reaction>
</comment>
<comment type="pathway">
    <text evidence="1">Amino-acid biosynthesis; L-proline biosynthesis; L-glutamate 5-semialdehyde from L-glutamate: step 1/2.</text>
</comment>
<comment type="subcellular location">
    <subcellularLocation>
        <location evidence="1">Cytoplasm</location>
    </subcellularLocation>
</comment>
<comment type="similarity">
    <text evidence="1">Belongs to the glutamate 5-kinase family.</text>
</comment>
<evidence type="ECO:0000255" key="1">
    <source>
        <dbReference type="HAMAP-Rule" id="MF_00456"/>
    </source>
</evidence>
<keyword id="KW-0028">Amino-acid biosynthesis</keyword>
<keyword id="KW-0067">ATP-binding</keyword>
<keyword id="KW-0963">Cytoplasm</keyword>
<keyword id="KW-0418">Kinase</keyword>
<keyword id="KW-0547">Nucleotide-binding</keyword>
<keyword id="KW-0641">Proline biosynthesis</keyword>
<keyword id="KW-1185">Reference proteome</keyword>
<keyword id="KW-0808">Transferase</keyword>
<proteinExistence type="inferred from homology"/>
<reference key="1">
    <citation type="journal article" date="2016" name="Genome Announc.">
        <title>Complete genome sequence of Alkaliphilus metalliredigens strain QYMF, an alkaliphilic and metal-reducing bacterium isolated from borax-contaminated leachate ponds.</title>
        <authorList>
            <person name="Hwang C."/>
            <person name="Copeland A."/>
            <person name="Lucas S."/>
            <person name="Lapidus A."/>
            <person name="Barry K."/>
            <person name="Detter J.C."/>
            <person name="Glavina Del Rio T."/>
            <person name="Hammon N."/>
            <person name="Israni S."/>
            <person name="Dalin E."/>
            <person name="Tice H."/>
            <person name="Pitluck S."/>
            <person name="Chertkov O."/>
            <person name="Brettin T."/>
            <person name="Bruce D."/>
            <person name="Han C."/>
            <person name="Schmutz J."/>
            <person name="Larimer F."/>
            <person name="Land M.L."/>
            <person name="Hauser L."/>
            <person name="Kyrpides N."/>
            <person name="Mikhailova N."/>
            <person name="Ye Q."/>
            <person name="Zhou J."/>
            <person name="Richardson P."/>
            <person name="Fields M.W."/>
        </authorList>
    </citation>
    <scope>NUCLEOTIDE SEQUENCE [LARGE SCALE GENOMIC DNA]</scope>
    <source>
        <strain>QYMF</strain>
    </source>
</reference>
<gene>
    <name evidence="1" type="primary">proB</name>
    <name type="ordered locus">Amet_3645</name>
</gene>
<organism>
    <name type="scientific">Alkaliphilus metalliredigens (strain QYMF)</name>
    <dbReference type="NCBI Taxonomy" id="293826"/>
    <lineage>
        <taxon>Bacteria</taxon>
        <taxon>Bacillati</taxon>
        <taxon>Bacillota</taxon>
        <taxon>Clostridia</taxon>
        <taxon>Peptostreptococcales</taxon>
        <taxon>Natronincolaceae</taxon>
        <taxon>Alkaliphilus</taxon>
    </lineage>
</organism>
<sequence>MIEELINKSKKIVIKIGSNTLSNDNGTINKNFLKELSEQIIYLRDKGKQFVIVSSGARIAGVSTLGKWMRKEDMNYKQALCAIGQVELMDAYRRCFEPYNVFIAQMLLTRDDFSDAHRRLNIRNTLFTLVDEGVIPIINENDTVSVEEIRIGDNDTLAALTTNIWNADLLILFSDIDGIYDKNPKEHEDAILVENVMNIDELLEKIEVGDVNEFGTGGIATKIEAAKAVNDYGIPMILANGKKENILLKLLEGTEKATIFQAGK</sequence>
<name>PROB_ALKMQ</name>
<feature type="chain" id="PRO_1000193684" description="Glutamate 5-kinase">
    <location>
        <begin position="1"/>
        <end position="264"/>
    </location>
</feature>
<feature type="binding site" evidence="1">
    <location>
        <position position="15"/>
    </location>
    <ligand>
        <name>ATP</name>
        <dbReference type="ChEBI" id="CHEBI:30616"/>
    </ligand>
</feature>
<feature type="binding site" evidence="1">
    <location>
        <position position="55"/>
    </location>
    <ligand>
        <name>substrate</name>
    </ligand>
</feature>
<feature type="binding site" evidence="1">
    <location>
        <position position="142"/>
    </location>
    <ligand>
        <name>substrate</name>
    </ligand>
</feature>
<feature type="binding site" evidence="1">
    <location>
        <position position="154"/>
    </location>
    <ligand>
        <name>substrate</name>
    </ligand>
</feature>
<feature type="binding site" evidence="1">
    <location>
        <begin position="174"/>
        <end position="175"/>
    </location>
    <ligand>
        <name>ATP</name>
        <dbReference type="ChEBI" id="CHEBI:30616"/>
    </ligand>
</feature>
<feature type="binding site" evidence="1">
    <location>
        <begin position="216"/>
        <end position="222"/>
    </location>
    <ligand>
        <name>ATP</name>
        <dbReference type="ChEBI" id="CHEBI:30616"/>
    </ligand>
</feature>